<reference key="1">
    <citation type="journal article" date="1996" name="Plant Mol. Biol.">
        <title>Phytochrome of the green alga Mougeotia: cDNA sequence, autoregulation and phylogenetic position.</title>
        <authorList>
            <person name="Winands A."/>
            <person name="Wagner G."/>
        </authorList>
    </citation>
    <scope>NUCLEOTIDE SEQUENCE [MRNA]</scope>
    <source>
        <strain>B164.80</strain>
    </source>
</reference>
<reference key="2">
    <citation type="journal article" date="1992" name="Photochem. Photobiol.">
        <title>Partial nucleotide sequence of phytochrome from the zygnematophycean green alga Mougeotia.</title>
        <authorList>
            <person name="Winands A."/>
            <person name="Wagner G."/>
            <person name="Marx S."/>
            <person name="Schneider-Poetsch H.A.W."/>
        </authorList>
    </citation>
    <scope>NUCLEOTIDE SEQUENCE [GENOMIC DNA] OF 248-435</scope>
    <source>
        <strain>B164.80</strain>
    </source>
</reference>
<keyword id="KW-0157">Chromophore</keyword>
<keyword id="KW-0600">Photoreceptor protein</keyword>
<keyword id="KW-0675">Receptor</keyword>
<keyword id="KW-0677">Repeat</keyword>
<keyword id="KW-0716">Sensory transduction</keyword>
<keyword id="KW-0804">Transcription</keyword>
<keyword id="KW-0805">Transcription regulation</keyword>
<gene>
    <name type="primary">PHY</name>
</gene>
<proteinExistence type="evidence at transcript level"/>
<protein>
    <recommendedName>
        <fullName>Phytochrome</fullName>
    </recommendedName>
</protein>
<dbReference type="EMBL" id="X95550">
    <property type="protein sequence ID" value="CAA64796.1"/>
    <property type="molecule type" value="mRNA"/>
</dbReference>
<dbReference type="EMBL" id="S52048">
    <property type="protein sequence ID" value="AAB24769.1"/>
    <property type="molecule type" value="Genomic_DNA"/>
</dbReference>
<dbReference type="SMR" id="P33529"/>
<dbReference type="GO" id="GO:0000155">
    <property type="term" value="F:phosphorelay sensor kinase activity"/>
    <property type="evidence" value="ECO:0007669"/>
    <property type="project" value="InterPro"/>
</dbReference>
<dbReference type="GO" id="GO:0009881">
    <property type="term" value="F:photoreceptor activity"/>
    <property type="evidence" value="ECO:0007669"/>
    <property type="project" value="UniProtKB-KW"/>
</dbReference>
<dbReference type="GO" id="GO:0042803">
    <property type="term" value="F:protein homodimerization activity"/>
    <property type="evidence" value="ECO:0007669"/>
    <property type="project" value="InterPro"/>
</dbReference>
<dbReference type="GO" id="GO:0009584">
    <property type="term" value="P:detection of visible light"/>
    <property type="evidence" value="ECO:0007669"/>
    <property type="project" value="InterPro"/>
</dbReference>
<dbReference type="GO" id="GO:0009585">
    <property type="term" value="P:red, far-red light phototransduction"/>
    <property type="evidence" value="ECO:0007669"/>
    <property type="project" value="InterPro"/>
</dbReference>
<dbReference type="GO" id="GO:0006355">
    <property type="term" value="P:regulation of DNA-templated transcription"/>
    <property type="evidence" value="ECO:0007669"/>
    <property type="project" value="InterPro"/>
</dbReference>
<dbReference type="CDD" id="cd16932">
    <property type="entry name" value="HATPase_Phy-like"/>
    <property type="match status" value="1"/>
</dbReference>
<dbReference type="CDD" id="cd00130">
    <property type="entry name" value="PAS"/>
    <property type="match status" value="2"/>
</dbReference>
<dbReference type="FunFam" id="3.30.450.20:FF:000039">
    <property type="entry name" value="Phytochrome"/>
    <property type="match status" value="1"/>
</dbReference>
<dbReference type="FunFam" id="3.30.450.270:FF:000001">
    <property type="entry name" value="Phytochrome"/>
    <property type="match status" value="1"/>
</dbReference>
<dbReference type="Gene3D" id="3.30.450.270">
    <property type="match status" value="1"/>
</dbReference>
<dbReference type="Gene3D" id="3.30.450.40">
    <property type="match status" value="1"/>
</dbReference>
<dbReference type="Gene3D" id="3.30.565.10">
    <property type="entry name" value="Histidine kinase-like ATPase, C-terminal domain"/>
    <property type="match status" value="1"/>
</dbReference>
<dbReference type="Gene3D" id="3.30.450.20">
    <property type="entry name" value="PAS domain"/>
    <property type="match status" value="3"/>
</dbReference>
<dbReference type="InterPro" id="IPR003018">
    <property type="entry name" value="GAF"/>
</dbReference>
<dbReference type="InterPro" id="IPR029016">
    <property type="entry name" value="GAF-like_dom_sf"/>
</dbReference>
<dbReference type="InterPro" id="IPR036890">
    <property type="entry name" value="HATPase_C_sf"/>
</dbReference>
<dbReference type="InterPro" id="IPR005467">
    <property type="entry name" value="His_kinase_dom"/>
</dbReference>
<dbReference type="InterPro" id="IPR003661">
    <property type="entry name" value="HisK_dim/P_dom"/>
</dbReference>
<dbReference type="InterPro" id="IPR000014">
    <property type="entry name" value="PAS"/>
</dbReference>
<dbReference type="InterPro" id="IPR000700">
    <property type="entry name" value="PAS-assoc_C"/>
</dbReference>
<dbReference type="InterPro" id="IPR035965">
    <property type="entry name" value="PAS-like_dom_sf"/>
</dbReference>
<dbReference type="InterPro" id="IPR013654">
    <property type="entry name" value="PAS_2"/>
</dbReference>
<dbReference type="InterPro" id="IPR013767">
    <property type="entry name" value="PAS_fold"/>
</dbReference>
<dbReference type="InterPro" id="IPR044767">
    <property type="entry name" value="Phy_HATPase-like"/>
</dbReference>
<dbReference type="InterPro" id="IPR016132">
    <property type="entry name" value="Phyto_chromo_attachment"/>
</dbReference>
<dbReference type="InterPro" id="IPR013516">
    <property type="entry name" value="Phyto_chromo_BS"/>
</dbReference>
<dbReference type="InterPro" id="IPR001294">
    <property type="entry name" value="Phytochrome"/>
</dbReference>
<dbReference type="InterPro" id="IPR012129">
    <property type="entry name" value="Phytochrome_A-E"/>
</dbReference>
<dbReference type="InterPro" id="IPR013515">
    <property type="entry name" value="Phytochrome_cen-reg"/>
</dbReference>
<dbReference type="InterPro" id="IPR043150">
    <property type="entry name" value="Phytochrome_PHY_sf"/>
</dbReference>
<dbReference type="NCBIfam" id="TIGR00229">
    <property type="entry name" value="sensory_box"/>
    <property type="match status" value="2"/>
</dbReference>
<dbReference type="PANTHER" id="PTHR47876">
    <property type="entry name" value="OS08G0260000 PROTEIN"/>
    <property type="match status" value="1"/>
</dbReference>
<dbReference type="PANTHER" id="PTHR47876:SF3">
    <property type="entry name" value="PHYTOCHROME 1"/>
    <property type="match status" value="1"/>
</dbReference>
<dbReference type="Pfam" id="PF01590">
    <property type="entry name" value="GAF"/>
    <property type="match status" value="1"/>
</dbReference>
<dbReference type="Pfam" id="PF02518">
    <property type="entry name" value="HATPase_c"/>
    <property type="match status" value="1"/>
</dbReference>
<dbReference type="Pfam" id="PF00512">
    <property type="entry name" value="HisKA"/>
    <property type="match status" value="1"/>
</dbReference>
<dbReference type="Pfam" id="PF00989">
    <property type="entry name" value="PAS"/>
    <property type="match status" value="2"/>
</dbReference>
<dbReference type="Pfam" id="PF08446">
    <property type="entry name" value="PAS_2"/>
    <property type="match status" value="1"/>
</dbReference>
<dbReference type="Pfam" id="PF00360">
    <property type="entry name" value="PHY"/>
    <property type="match status" value="1"/>
</dbReference>
<dbReference type="PIRSF" id="PIRSF000084">
    <property type="entry name" value="Phytochrome"/>
    <property type="match status" value="1"/>
</dbReference>
<dbReference type="PRINTS" id="PR01033">
    <property type="entry name" value="PHYTOCHROME"/>
</dbReference>
<dbReference type="SMART" id="SM00065">
    <property type="entry name" value="GAF"/>
    <property type="match status" value="1"/>
</dbReference>
<dbReference type="SMART" id="SM00387">
    <property type="entry name" value="HATPase_c"/>
    <property type="match status" value="1"/>
</dbReference>
<dbReference type="SMART" id="SM00388">
    <property type="entry name" value="HisKA"/>
    <property type="match status" value="1"/>
</dbReference>
<dbReference type="SMART" id="SM00091">
    <property type="entry name" value="PAS"/>
    <property type="match status" value="2"/>
</dbReference>
<dbReference type="SUPFAM" id="SSF55874">
    <property type="entry name" value="ATPase domain of HSP90 chaperone/DNA topoisomerase II/histidine kinase"/>
    <property type="match status" value="1"/>
</dbReference>
<dbReference type="SUPFAM" id="SSF55781">
    <property type="entry name" value="GAF domain-like"/>
    <property type="match status" value="2"/>
</dbReference>
<dbReference type="SUPFAM" id="SSF55785">
    <property type="entry name" value="PYP-like sensor domain (PAS domain)"/>
    <property type="match status" value="3"/>
</dbReference>
<dbReference type="PROSITE" id="PS50109">
    <property type="entry name" value="HIS_KIN"/>
    <property type="match status" value="1"/>
</dbReference>
<dbReference type="PROSITE" id="PS50113">
    <property type="entry name" value="PAC"/>
    <property type="match status" value="1"/>
</dbReference>
<dbReference type="PROSITE" id="PS50112">
    <property type="entry name" value="PAS"/>
    <property type="match status" value="2"/>
</dbReference>
<dbReference type="PROSITE" id="PS00245">
    <property type="entry name" value="PHYTOCHROME_1"/>
    <property type="match status" value="1"/>
</dbReference>
<dbReference type="PROSITE" id="PS50046">
    <property type="entry name" value="PHYTOCHROME_2"/>
    <property type="match status" value="1"/>
</dbReference>
<evidence type="ECO:0000250" key="1"/>
<evidence type="ECO:0000255" key="2">
    <source>
        <dbReference type="PROSITE-ProRule" id="PRU00107"/>
    </source>
</evidence>
<evidence type="ECO:0000255" key="3">
    <source>
        <dbReference type="PROSITE-ProRule" id="PRU00140"/>
    </source>
</evidence>
<evidence type="ECO:0000255" key="4">
    <source>
        <dbReference type="PROSITE-ProRule" id="PRU00141"/>
    </source>
</evidence>
<evidence type="ECO:0000256" key="5">
    <source>
        <dbReference type="SAM" id="MobiDB-lite"/>
    </source>
</evidence>
<evidence type="ECO:0000305" key="6"/>
<feature type="chain" id="PRO_0000171976" description="Phytochrome">
    <location>
        <begin position="1"/>
        <end position="1124"/>
    </location>
</feature>
<feature type="domain" description="GAF">
    <location>
        <begin position="220"/>
        <end position="399"/>
    </location>
</feature>
<feature type="domain" description="PAS 1" evidence="3">
    <location>
        <begin position="613"/>
        <end position="684"/>
    </location>
</feature>
<feature type="domain" description="PAC" evidence="4">
    <location>
        <begin position="687"/>
        <end position="743"/>
    </location>
</feature>
<feature type="domain" description="PAS 2" evidence="3">
    <location>
        <begin position="747"/>
        <end position="818"/>
    </location>
</feature>
<feature type="domain" description="Histidine kinase" evidence="2">
    <location>
        <begin position="895"/>
        <end position="1116"/>
    </location>
</feature>
<feature type="region of interest" description="Disordered" evidence="5">
    <location>
        <begin position="1"/>
        <end position="27"/>
    </location>
</feature>
<feature type="compositionally biased region" description="Low complexity" evidence="5">
    <location>
        <begin position="1"/>
        <end position="18"/>
    </location>
</feature>
<feature type="binding site" description="covalent" evidence="1">
    <location>
        <position position="325"/>
    </location>
    <ligand>
        <name>phytochromobilin</name>
        <dbReference type="ChEBI" id="CHEBI:189064"/>
    </ligand>
</feature>
<feature type="sequence conflict" description="In Ref. 2; AAB24769." evidence="6" ref="2">
    <original>S</original>
    <variation>C</variation>
    <location>
        <position position="342"/>
    </location>
</feature>
<feature type="sequence conflict" description="In Ref. 2; AAB24769." evidence="6" ref="2">
    <original>R</original>
    <variation>H</variation>
    <location>
        <position position="381"/>
    </location>
</feature>
<feature type="sequence conflict" description="In Ref. 2; AAB24769." evidence="6" ref="2">
    <original>V</original>
    <variation>A</variation>
    <location>
        <position position="399"/>
    </location>
</feature>
<accession>P33529</accession>
<accession>Q40364</accession>
<sequence length="1124" mass="123924">MSSSKRSQSSGRSSTQTRIQNRVTQASADAKLSTAFEVSSSSGGDSFDYTKSVTASLNPTEPLAAKSVTAYLQRMQRGSIIQSFGCMMAVEPGTFRIIAYSENVSEMLGVTPQSVPTGDHQNAIGIGTDVRSLLSPSSVSVVEKAVAANDVSMMNPIAVYSLATQKLFFAILHMNDVGLVIDLEPISSSSDSAMFSAGAVQSHKLAAKAISRLQSLPGGDICGLCDVVVEEVRELTGYDRVMAYKFHDDEHGEVVAEIRRSDLEPYLGLHYPATDIPQASRFLFIKNRIRMICDCTSPQVKVVQDSRIPQEMSLAGSTMRGVHGCHTQYMMNMGSTASLVMSVTINDTNEIAGGPGMKGRKLWGLIVCHHSTPRHIPFPIRSACEFLMQVFGLQLNMEVELAAQHREKHILRTQTLLCDMLLRDAPMGIVSQSPNVMDLVKCDGAALLFGGRCWLLGISPTQEQVKDIATWLISSHTDTTGLSTDSLVDAGYPKARELGVDVCGMAAARITENDFLFWFRGHAQKEVKWAGAKDGGSEEDGSRMHPRSSFKAFLEVVKQRSLPWEDVEMDAIHSLQLILRGSFQDIEDKEDRKIVHARLKEMHLQGMEELSSVASEMVRLIETATAPILAVDTAGCVNGWNFKISELTGLSIPEVMGKSLVKDLTHPSSKDTVEKLLYMALNGEEEQNVEIRLKTWGMQQGKGPVILMVNACASRDVSEKVVGVCFVAQDVTGEKIVQDKFTRIQGDYTTIVRSHNSLIPPIFGSDESGFCVEWNPAMERLSGVKREEAIGKMLTRELFGGILRLKNVDGLTKFMIVLNAAMSSHDTDKFPFTFYDRSGKIVEVLLTTSKRCNSEGVVTGVFCFLHTASSELQQALTVQKAAERVAEVKAKELAYIRQEIQNPLDGIHFARSFMEHTVLSEDQKQLIETSATCEKQLRRILADMDLASIEKGYLELETGEFSMATVMNSVVSQGMIQSTQKNLQLYCDTPPDFKSLSVFGDQVRLQQVLADFLLNAVQFTPPSGWVEIKVEPVVKKLPGGVSVANVDFRVSHPGEGLPEDLIDQMFDRADARVKSQEGLGLSICRKLVRLMNGEVQYRREGERNFFLLQLELPLAQRDDQASMK</sequence>
<organism>
    <name type="scientific">Mougeotia scalaris</name>
    <name type="common">Green alga</name>
    <name type="synonym">Sphaerocarpus scalaris</name>
    <dbReference type="NCBI Taxonomy" id="13158"/>
    <lineage>
        <taxon>Eukaryota</taxon>
        <taxon>Viridiplantae</taxon>
        <taxon>Streptophyta</taxon>
        <taxon>Zygnematophyceae</taxon>
        <taxon>Zygnematophycidae</taxon>
        <taxon>Zygnematales</taxon>
        <taxon>Zygnemataceae</taxon>
        <taxon>Mougeotia</taxon>
    </lineage>
</organism>
<name>PHY_MOUSC</name>
<comment type="function">
    <text>Regulatory photoreceptor which exists in two forms that are reversibly interconvertible by light: the Pr form that absorbs maximally in the red region of the spectrum and the Pfr form that absorbs maximally in the far-red region. Photoconversion of Pr to Pfr induces an array of morphogenic responses, whereas reconversion of Pfr to Pr cancels the induction of those responses. Pfr controls the expression of a number of nuclear genes including those encoding the small subunit of ribulose-bisphosphate carboxylase, chlorophyll A/B binding protein, protochlorophyllide reductase, rRNA, etc. It also controls the expression of its own gene(s) in a negative feedback fashion.</text>
</comment>
<comment type="subunit">
    <text>Homodimer.</text>
</comment>
<comment type="PTM">
    <text evidence="1">Contains one covalently linked phytochromobilin chromophore.</text>
</comment>
<comment type="similarity">
    <text evidence="6">Belongs to the phytochrome family.</text>
</comment>